<name>MRS2_ASPFU</name>
<reference key="1">
    <citation type="journal article" date="2005" name="Nature">
        <title>Genomic sequence of the pathogenic and allergenic filamentous fungus Aspergillus fumigatus.</title>
        <authorList>
            <person name="Nierman W.C."/>
            <person name="Pain A."/>
            <person name="Anderson M.J."/>
            <person name="Wortman J.R."/>
            <person name="Kim H.S."/>
            <person name="Arroyo J."/>
            <person name="Berriman M."/>
            <person name="Abe K."/>
            <person name="Archer D.B."/>
            <person name="Bermejo C."/>
            <person name="Bennett J.W."/>
            <person name="Bowyer P."/>
            <person name="Chen D."/>
            <person name="Collins M."/>
            <person name="Coulsen R."/>
            <person name="Davies R."/>
            <person name="Dyer P.S."/>
            <person name="Farman M.L."/>
            <person name="Fedorova N."/>
            <person name="Fedorova N.D."/>
            <person name="Feldblyum T.V."/>
            <person name="Fischer R."/>
            <person name="Fosker N."/>
            <person name="Fraser A."/>
            <person name="Garcia J.L."/>
            <person name="Garcia M.J."/>
            <person name="Goble A."/>
            <person name="Goldman G.H."/>
            <person name="Gomi K."/>
            <person name="Griffith-Jones S."/>
            <person name="Gwilliam R."/>
            <person name="Haas B.J."/>
            <person name="Haas H."/>
            <person name="Harris D.E."/>
            <person name="Horiuchi H."/>
            <person name="Huang J."/>
            <person name="Humphray S."/>
            <person name="Jimenez J."/>
            <person name="Keller N."/>
            <person name="Khouri H."/>
            <person name="Kitamoto K."/>
            <person name="Kobayashi T."/>
            <person name="Konzack S."/>
            <person name="Kulkarni R."/>
            <person name="Kumagai T."/>
            <person name="Lafton A."/>
            <person name="Latge J.-P."/>
            <person name="Li W."/>
            <person name="Lord A."/>
            <person name="Lu C."/>
            <person name="Majoros W.H."/>
            <person name="May G.S."/>
            <person name="Miller B.L."/>
            <person name="Mohamoud Y."/>
            <person name="Molina M."/>
            <person name="Monod M."/>
            <person name="Mouyna I."/>
            <person name="Mulligan S."/>
            <person name="Murphy L.D."/>
            <person name="O'Neil S."/>
            <person name="Paulsen I."/>
            <person name="Penalva M.A."/>
            <person name="Pertea M."/>
            <person name="Price C."/>
            <person name="Pritchard B.L."/>
            <person name="Quail M.A."/>
            <person name="Rabbinowitsch E."/>
            <person name="Rawlins N."/>
            <person name="Rajandream M.A."/>
            <person name="Reichard U."/>
            <person name="Renauld H."/>
            <person name="Robson G.D."/>
            <person name="Rodriguez de Cordoba S."/>
            <person name="Rodriguez-Pena J.M."/>
            <person name="Ronning C.M."/>
            <person name="Rutter S."/>
            <person name="Salzberg S.L."/>
            <person name="Sanchez M."/>
            <person name="Sanchez-Ferrero J.C."/>
            <person name="Saunders D."/>
            <person name="Seeger K."/>
            <person name="Squares R."/>
            <person name="Squares S."/>
            <person name="Takeuchi M."/>
            <person name="Tekaia F."/>
            <person name="Turner G."/>
            <person name="Vazquez de Aldana C.R."/>
            <person name="Weidman J."/>
            <person name="White O."/>
            <person name="Woodward J.R."/>
            <person name="Yu J.-H."/>
            <person name="Fraser C.M."/>
            <person name="Galagan J.E."/>
            <person name="Asai K."/>
            <person name="Machida M."/>
            <person name="Hall N."/>
            <person name="Barrell B.G."/>
            <person name="Denning D.W."/>
        </authorList>
    </citation>
    <scope>NUCLEOTIDE SEQUENCE [LARGE SCALE GENOMIC DNA]</scope>
    <source>
        <strain>ATCC MYA-4609 / CBS 101355 / FGSC A1100 / Af293</strain>
    </source>
</reference>
<organism>
    <name type="scientific">Aspergillus fumigatus (strain ATCC MYA-4609 / CBS 101355 / FGSC A1100 / Af293)</name>
    <name type="common">Neosartorya fumigata</name>
    <dbReference type="NCBI Taxonomy" id="330879"/>
    <lineage>
        <taxon>Eukaryota</taxon>
        <taxon>Fungi</taxon>
        <taxon>Dikarya</taxon>
        <taxon>Ascomycota</taxon>
        <taxon>Pezizomycotina</taxon>
        <taxon>Eurotiomycetes</taxon>
        <taxon>Eurotiomycetidae</taxon>
        <taxon>Eurotiales</taxon>
        <taxon>Aspergillaceae</taxon>
        <taxon>Aspergillus</taxon>
        <taxon>Aspergillus subgen. Fumigati</taxon>
    </lineage>
</organism>
<feature type="transit peptide" description="Mitochondrion" evidence="2">
    <location>
        <begin position="1"/>
        <end position="56"/>
    </location>
</feature>
<feature type="chain" id="PRO_0000043240" description="Mitochondrial inner membrane magnesium transporter mrs2">
    <location>
        <begin position="57"/>
        <end position="597"/>
    </location>
</feature>
<feature type="transmembrane region" description="Helical" evidence="2">
    <location>
        <begin position="423"/>
        <end position="443"/>
    </location>
</feature>
<feature type="transmembrane region" description="Helical" evidence="2">
    <location>
        <begin position="462"/>
        <end position="482"/>
    </location>
</feature>
<feature type="region of interest" description="Disordered" evidence="3">
    <location>
        <begin position="552"/>
        <end position="597"/>
    </location>
</feature>
<feature type="short sequence motif" description="YGMN">
    <location>
        <begin position="447"/>
        <end position="450"/>
    </location>
</feature>
<feature type="compositionally biased region" description="Low complexity" evidence="3">
    <location>
        <begin position="552"/>
        <end position="577"/>
    </location>
</feature>
<feature type="compositionally biased region" description="Basic and acidic residues" evidence="3">
    <location>
        <begin position="581"/>
        <end position="591"/>
    </location>
</feature>
<evidence type="ECO:0000250" key="1">
    <source>
        <dbReference type="UniProtKB" id="Q01926"/>
    </source>
</evidence>
<evidence type="ECO:0000255" key="2"/>
<evidence type="ECO:0000256" key="3">
    <source>
        <dbReference type="SAM" id="MobiDB-lite"/>
    </source>
</evidence>
<evidence type="ECO:0000305" key="4"/>
<proteinExistence type="inferred from homology"/>
<comment type="function">
    <text evidence="1">High-conductance magnesium-selective channel that mediates the influx of magnesium into the mitochondrial matrix. Essential for the splicing of mRNA group II introns in mitochondria by affecting mitochondrial magnesium concentrations, which are critical for group II intron splicing. It also suppresses a variety of mitochondrial intron mutations and its absence may disturb the assembly of mitochondrial membrane complexes.</text>
</comment>
<comment type="subunit">
    <text evidence="1">Homopentamer. Forms homooligomers. Interacts with MFM1.</text>
</comment>
<comment type="subcellular location">
    <subcellularLocation>
        <location evidence="1">Mitochondrion inner membrane</location>
        <topology evidence="1">Multi-pass membrane protein</topology>
    </subcellularLocation>
</comment>
<comment type="similarity">
    <text evidence="4">Belongs to the CorA metal ion transporter (MIT) (TC 1.A.35) family.</text>
</comment>
<gene>
    <name type="primary">mrs2</name>
    <name type="ORF">AFUA_6G02550</name>
</gene>
<keyword id="KW-0406">Ion transport</keyword>
<keyword id="KW-0460">Magnesium</keyword>
<keyword id="KW-0472">Membrane</keyword>
<keyword id="KW-0496">Mitochondrion</keyword>
<keyword id="KW-0999">Mitochondrion inner membrane</keyword>
<keyword id="KW-1185">Reference proteome</keyword>
<keyword id="KW-0809">Transit peptide</keyword>
<keyword id="KW-0812">Transmembrane</keyword>
<keyword id="KW-1133">Transmembrane helix</keyword>
<keyword id="KW-0813">Transport</keyword>
<sequence>MLSSSHLKPSAPSATLLRFLRSQSDFLSVNSSRCARPSRSKPYVHQILPCNASSRASSTWTCTASAPHRTTLQTSLVRTPTPAARSHSSSRPRLWLCAGQAGRSSSIFPLSNAPYSRSASTKSRPLLRRLLDLRRSNSSADKHNRGGPALIDDGTEGGFTIGRGLAAKATNEPRLRCTEFDKNGNVTLVNGEFKKSELIAKYGLLPRDLRKIDSSTLPHILVRPSAILINLLHLRVLIKHDRVLVFDAYGSTDSYMQSLFVYDLEGKLQQKQTGGFGALPYEFRALEAVLISVTTGLEEEFNGVREPVVRVLRALEEDIDRDKLRHLLIYSKKLGTFEQKARLVRDAIDDLLEADDDLAAMYLTERANGVQREEDDHQEVEMLLESYHKVCDEIVQASGNLVTSIRNTEEVVKAILDANRNSLMLLDLKFSIGTLGLATGTLFSALYGMNLKNFIEESDLGFGAVSMTCFMITAVVCVYGLAKLRKLQRVRMWGEAGVGGAPLTPLTTRSGILSGHRSNWRADSIEPVWGSLPGEARTERIKRLRETAAAAAARSASADATAQRASALRSSANANGGAPKGSEHSPTRETEASGSSA</sequence>
<accession>Q4WCV3</accession>
<protein>
    <recommendedName>
        <fullName>Mitochondrial inner membrane magnesium transporter mrs2</fullName>
    </recommendedName>
    <alternativeName>
        <fullName>RNA-splicing protein mrs2</fullName>
    </alternativeName>
</protein>
<dbReference type="EMBL" id="AAHF01000012">
    <property type="protein sequence ID" value="EAL85785.1"/>
    <property type="molecule type" value="Genomic_DNA"/>
</dbReference>
<dbReference type="RefSeq" id="XP_747823.1">
    <property type="nucleotide sequence ID" value="XM_742730.1"/>
</dbReference>
<dbReference type="SMR" id="Q4WCV3"/>
<dbReference type="FunCoup" id="Q4WCV3">
    <property type="interactions" value="345"/>
</dbReference>
<dbReference type="STRING" id="330879.Q4WCV3"/>
<dbReference type="EnsemblFungi" id="EAL85785">
    <property type="protein sequence ID" value="EAL85785"/>
    <property type="gene ID" value="AFUA_6G02550"/>
</dbReference>
<dbReference type="GeneID" id="3505100"/>
<dbReference type="KEGG" id="afm:AFUA_6G02550"/>
<dbReference type="VEuPathDB" id="FungiDB:Afu6g02550"/>
<dbReference type="eggNOG" id="KOG2662">
    <property type="taxonomic scope" value="Eukaryota"/>
</dbReference>
<dbReference type="HOGENOM" id="CLU_025144_2_1_1"/>
<dbReference type="InParanoid" id="Q4WCV3"/>
<dbReference type="OMA" id="HRSNWRA"/>
<dbReference type="OrthoDB" id="10251508at2759"/>
<dbReference type="Proteomes" id="UP000002530">
    <property type="component" value="Chromosome 6"/>
</dbReference>
<dbReference type="GO" id="GO:0005743">
    <property type="term" value="C:mitochondrial inner membrane"/>
    <property type="evidence" value="ECO:0000250"/>
    <property type="project" value="UniProtKB"/>
</dbReference>
<dbReference type="GO" id="GO:0015095">
    <property type="term" value="F:magnesium ion transmembrane transporter activity"/>
    <property type="evidence" value="ECO:0000250"/>
    <property type="project" value="UniProtKB"/>
</dbReference>
<dbReference type="GO" id="GO:0045016">
    <property type="term" value="P:mitochondrial magnesium ion transmembrane transport"/>
    <property type="evidence" value="ECO:0000250"/>
    <property type="project" value="UniProtKB"/>
</dbReference>
<dbReference type="CDD" id="cd12823">
    <property type="entry name" value="Mrs2_Mfm1p-like"/>
    <property type="match status" value="1"/>
</dbReference>
<dbReference type="FunFam" id="1.20.58.340:FF:000005">
    <property type="entry name" value="Inner membrane magnesium transporter MRS2"/>
    <property type="match status" value="1"/>
</dbReference>
<dbReference type="FunFam" id="2.40.128.330:FF:000002">
    <property type="entry name" value="Inner membrane magnesium transporter mrs2"/>
    <property type="match status" value="1"/>
</dbReference>
<dbReference type="Gene3D" id="2.40.128.330">
    <property type="match status" value="1"/>
</dbReference>
<dbReference type="Gene3D" id="1.20.58.340">
    <property type="entry name" value="Magnesium transport protein CorA, transmembrane region"/>
    <property type="match status" value="1"/>
</dbReference>
<dbReference type="InterPro" id="IPR039204">
    <property type="entry name" value="MRS2-like"/>
</dbReference>
<dbReference type="PANTHER" id="PTHR13890:SF0">
    <property type="entry name" value="MAGNESIUM TRANSPORTER MRS2 HOMOLOG, MITOCHONDRIAL"/>
    <property type="match status" value="1"/>
</dbReference>
<dbReference type="PANTHER" id="PTHR13890">
    <property type="entry name" value="RNA SPLICING PROTEIN MRS2, MITOCHONDRIAL"/>
    <property type="match status" value="1"/>
</dbReference>
<dbReference type="Pfam" id="PF22099">
    <property type="entry name" value="MRS2-like"/>
    <property type="match status" value="1"/>
</dbReference>